<feature type="chain" id="PRO_0000191029" description="Liprin-alpha-3">
    <location>
        <begin position="1"/>
        <end position="1194"/>
    </location>
</feature>
<feature type="domain" description="SAM 1" evidence="5">
    <location>
        <begin position="838"/>
        <end position="904"/>
    </location>
</feature>
<feature type="domain" description="SAM 2" evidence="5">
    <location>
        <begin position="953"/>
        <end position="1017"/>
    </location>
</feature>
<feature type="domain" description="SAM 3" evidence="5">
    <location>
        <begin position="1041"/>
        <end position="1110"/>
    </location>
</feature>
<feature type="region of interest" description="Disordered" evidence="6">
    <location>
        <begin position="1"/>
        <end position="23"/>
    </location>
</feature>
<feature type="region of interest" description="Disordered" evidence="6">
    <location>
        <begin position="202"/>
        <end position="233"/>
    </location>
</feature>
<feature type="region of interest" description="Disordered" evidence="6">
    <location>
        <begin position="525"/>
        <end position="583"/>
    </location>
</feature>
<feature type="region of interest" description="Disordered" evidence="6">
    <location>
        <begin position="624"/>
        <end position="819"/>
    </location>
</feature>
<feature type="region of interest" description="Disordered" evidence="6">
    <location>
        <begin position="1157"/>
        <end position="1194"/>
    </location>
</feature>
<feature type="coiled-coil region" evidence="4">
    <location>
        <begin position="26"/>
        <end position="133"/>
    </location>
</feature>
<feature type="coiled-coil region" evidence="4">
    <location>
        <begin position="161"/>
        <end position="501"/>
    </location>
</feature>
<feature type="coiled-coil region" evidence="4">
    <location>
        <begin position="596"/>
        <end position="644"/>
    </location>
</feature>
<feature type="coiled-coil region" evidence="4">
    <location>
        <begin position="1014"/>
        <end position="1040"/>
    </location>
</feature>
<feature type="compositionally biased region" description="Basic and acidic residues" evidence="6">
    <location>
        <begin position="202"/>
        <end position="217"/>
    </location>
</feature>
<feature type="compositionally biased region" description="Basic and acidic residues" evidence="6">
    <location>
        <begin position="548"/>
        <end position="559"/>
    </location>
</feature>
<feature type="compositionally biased region" description="Basic and acidic residues" evidence="6">
    <location>
        <begin position="624"/>
        <end position="636"/>
    </location>
</feature>
<feature type="compositionally biased region" description="Low complexity" evidence="6">
    <location>
        <begin position="651"/>
        <end position="666"/>
    </location>
</feature>
<feature type="compositionally biased region" description="Basic and acidic residues" evidence="6">
    <location>
        <begin position="687"/>
        <end position="701"/>
    </location>
</feature>
<feature type="compositionally biased region" description="Polar residues" evidence="6">
    <location>
        <begin position="785"/>
        <end position="797"/>
    </location>
</feature>
<feature type="compositionally biased region" description="Low complexity" evidence="6">
    <location>
        <begin position="1157"/>
        <end position="1169"/>
    </location>
</feature>
<feature type="modified residue" description="Phosphoserine" evidence="15 16">
    <location>
        <position position="17"/>
    </location>
</feature>
<feature type="modified residue" description="Phosphoserine" evidence="16">
    <location>
        <position position="142"/>
    </location>
</feature>
<feature type="modified residue" description="Phosphoserine" evidence="15">
    <location>
        <position position="207"/>
    </location>
</feature>
<feature type="modified residue" description="Phosphoserine" evidence="2">
    <location>
        <position position="431"/>
    </location>
</feature>
<feature type="modified residue" description="Phosphoserine" evidence="1">
    <location>
        <position position="508"/>
    </location>
</feature>
<feature type="modified residue" description="Phosphoserine" evidence="2">
    <location>
        <position position="640"/>
    </location>
</feature>
<feature type="modified residue" description="Phosphoserine" evidence="1">
    <location>
        <position position="645"/>
    </location>
</feature>
<feature type="modified residue" description="Phosphoserine" evidence="2">
    <location>
        <position position="668"/>
    </location>
</feature>
<feature type="modified residue" description="Phosphoserine" evidence="16">
    <location>
        <position position="683"/>
    </location>
</feature>
<feature type="modified residue" description="Phosphothreonine" evidence="15 16">
    <location>
        <position position="714"/>
    </location>
</feature>
<feature type="modified residue" description="Phosphoserine" evidence="2">
    <location>
        <position position="737"/>
    </location>
</feature>
<feature type="modified residue" description="Phosphothreonine" evidence="3">
    <location>
        <position position="792"/>
    </location>
</feature>
<feature type="modified residue" description="Phosphoserine" evidence="3">
    <location>
        <position position="794"/>
    </location>
</feature>
<feature type="modified residue" description="Phosphoserine" evidence="2">
    <location>
        <position position="1123"/>
    </location>
</feature>
<feature type="modified residue" description="Phosphoserine" evidence="16">
    <location>
        <position position="1164"/>
    </location>
</feature>
<feature type="splice variant" id="VSP_009392" description="In isoform 2." evidence="12 13">
    <location>
        <begin position="937"/>
        <end position="945"/>
    </location>
</feature>
<feature type="sequence variant" id="VAR_017757" description="In dbSNP:rs2303053." evidence="7 8 11">
    <original>A</original>
    <variation>S</variation>
    <location>
        <position position="563"/>
    </location>
</feature>
<feature type="sequence conflict" description="In Ref. 6; AAC26101." evidence="14" ref="6">
    <original>E</original>
    <variation>K</variation>
    <location>
        <position position="878"/>
    </location>
</feature>
<feature type="sequence conflict" description="In Ref. 6; AAC26101." evidence="14" ref="6">
    <original>I</original>
    <variation>V</variation>
    <location>
        <position position="1011"/>
    </location>
</feature>
<keyword id="KW-0025">Alternative splicing</keyword>
<keyword id="KW-0175">Coiled coil</keyword>
<keyword id="KW-0963">Cytoplasm</keyword>
<keyword id="KW-0968">Cytoplasmic vesicle</keyword>
<keyword id="KW-0597">Phosphoprotein</keyword>
<keyword id="KW-1267">Proteomics identification</keyword>
<keyword id="KW-1185">Reference proteome</keyword>
<keyword id="KW-0677">Repeat</keyword>
<accession>O75145</accession>
<accession>A8K142</accession>
<accession>Q3MJA0</accession>
<accession>Q9H8B5</accession>
<accession>Q9UEW4</accession>
<name>LIPA3_HUMAN</name>
<reference key="1">
    <citation type="journal article" date="1998" name="DNA Res.">
        <title>Prediction of the coding sequences of unidentified human genes. X. The complete sequences of 100 new cDNA clones from brain which can code for large proteins in vitro.</title>
        <authorList>
            <person name="Ishikawa K."/>
            <person name="Nagase T."/>
            <person name="Suyama M."/>
            <person name="Miyajima N."/>
            <person name="Tanaka A."/>
            <person name="Kotani H."/>
            <person name="Nomura N."/>
            <person name="Ohara O."/>
        </authorList>
    </citation>
    <scope>NUCLEOTIDE SEQUENCE [LARGE SCALE MRNA] (ISOFORM 1)</scope>
    <source>
        <tissue>Brain</tissue>
    </source>
</reference>
<reference key="2">
    <citation type="journal article" date="2002" name="DNA Res.">
        <title>Construction of expression-ready cDNA clones for KIAA genes: manual curation of 330 KIAA cDNA clones.</title>
        <authorList>
            <person name="Nakajima D."/>
            <person name="Okazaki N."/>
            <person name="Yamakawa H."/>
            <person name="Kikuno R."/>
            <person name="Ohara O."/>
            <person name="Nagase T."/>
        </authorList>
    </citation>
    <scope>SEQUENCE REVISION</scope>
</reference>
<reference key="3">
    <citation type="journal article" date="2004" name="Nat. Genet.">
        <title>Complete sequencing and characterization of 21,243 full-length human cDNAs.</title>
        <authorList>
            <person name="Ota T."/>
            <person name="Suzuki Y."/>
            <person name="Nishikawa T."/>
            <person name="Otsuki T."/>
            <person name="Sugiyama T."/>
            <person name="Irie R."/>
            <person name="Wakamatsu A."/>
            <person name="Hayashi K."/>
            <person name="Sato H."/>
            <person name="Nagai K."/>
            <person name="Kimura K."/>
            <person name="Makita H."/>
            <person name="Sekine M."/>
            <person name="Obayashi M."/>
            <person name="Nishi T."/>
            <person name="Shibahara T."/>
            <person name="Tanaka T."/>
            <person name="Ishii S."/>
            <person name="Yamamoto J."/>
            <person name="Saito K."/>
            <person name="Kawai Y."/>
            <person name="Isono Y."/>
            <person name="Nakamura Y."/>
            <person name="Nagahari K."/>
            <person name="Murakami K."/>
            <person name="Yasuda T."/>
            <person name="Iwayanagi T."/>
            <person name="Wagatsuma M."/>
            <person name="Shiratori A."/>
            <person name="Sudo H."/>
            <person name="Hosoiri T."/>
            <person name="Kaku Y."/>
            <person name="Kodaira H."/>
            <person name="Kondo H."/>
            <person name="Sugawara M."/>
            <person name="Takahashi M."/>
            <person name="Kanda K."/>
            <person name="Yokoi T."/>
            <person name="Furuya T."/>
            <person name="Kikkawa E."/>
            <person name="Omura Y."/>
            <person name="Abe K."/>
            <person name="Kamihara K."/>
            <person name="Katsuta N."/>
            <person name="Sato K."/>
            <person name="Tanikawa M."/>
            <person name="Yamazaki M."/>
            <person name="Ninomiya K."/>
            <person name="Ishibashi T."/>
            <person name="Yamashita H."/>
            <person name="Murakawa K."/>
            <person name="Fujimori K."/>
            <person name="Tanai H."/>
            <person name="Kimata M."/>
            <person name="Watanabe M."/>
            <person name="Hiraoka S."/>
            <person name="Chiba Y."/>
            <person name="Ishida S."/>
            <person name="Ono Y."/>
            <person name="Takiguchi S."/>
            <person name="Watanabe S."/>
            <person name="Yosida M."/>
            <person name="Hotuta T."/>
            <person name="Kusano J."/>
            <person name="Kanehori K."/>
            <person name="Takahashi-Fujii A."/>
            <person name="Hara H."/>
            <person name="Tanase T.-O."/>
            <person name="Nomura Y."/>
            <person name="Togiya S."/>
            <person name="Komai F."/>
            <person name="Hara R."/>
            <person name="Takeuchi K."/>
            <person name="Arita M."/>
            <person name="Imose N."/>
            <person name="Musashino K."/>
            <person name="Yuuki H."/>
            <person name="Oshima A."/>
            <person name="Sasaki N."/>
            <person name="Aotsuka S."/>
            <person name="Yoshikawa Y."/>
            <person name="Matsunawa H."/>
            <person name="Ichihara T."/>
            <person name="Shiohata N."/>
            <person name="Sano S."/>
            <person name="Moriya S."/>
            <person name="Momiyama H."/>
            <person name="Satoh N."/>
            <person name="Takami S."/>
            <person name="Terashima Y."/>
            <person name="Suzuki O."/>
            <person name="Nakagawa S."/>
            <person name="Senoh A."/>
            <person name="Mizoguchi H."/>
            <person name="Goto Y."/>
            <person name="Shimizu F."/>
            <person name="Wakebe H."/>
            <person name="Hishigaki H."/>
            <person name="Watanabe T."/>
            <person name="Sugiyama A."/>
            <person name="Takemoto M."/>
            <person name="Kawakami B."/>
            <person name="Yamazaki M."/>
            <person name="Watanabe K."/>
            <person name="Kumagai A."/>
            <person name="Itakura S."/>
            <person name="Fukuzumi Y."/>
            <person name="Fujimori Y."/>
            <person name="Komiyama M."/>
            <person name="Tashiro H."/>
            <person name="Tanigami A."/>
            <person name="Fujiwara T."/>
            <person name="Ono T."/>
            <person name="Yamada K."/>
            <person name="Fujii Y."/>
            <person name="Ozaki K."/>
            <person name="Hirao M."/>
            <person name="Ohmori Y."/>
            <person name="Kawabata A."/>
            <person name="Hikiji T."/>
            <person name="Kobatake N."/>
            <person name="Inagaki H."/>
            <person name="Ikema Y."/>
            <person name="Okamoto S."/>
            <person name="Okitani R."/>
            <person name="Kawakami T."/>
            <person name="Noguchi S."/>
            <person name="Itoh T."/>
            <person name="Shigeta K."/>
            <person name="Senba T."/>
            <person name="Matsumura K."/>
            <person name="Nakajima Y."/>
            <person name="Mizuno T."/>
            <person name="Morinaga M."/>
            <person name="Sasaki M."/>
            <person name="Togashi T."/>
            <person name="Oyama M."/>
            <person name="Hata H."/>
            <person name="Watanabe M."/>
            <person name="Komatsu T."/>
            <person name="Mizushima-Sugano J."/>
            <person name="Satoh T."/>
            <person name="Shirai Y."/>
            <person name="Takahashi Y."/>
            <person name="Nakagawa K."/>
            <person name="Okumura K."/>
            <person name="Nagase T."/>
            <person name="Nomura N."/>
            <person name="Kikuchi H."/>
            <person name="Masuho Y."/>
            <person name="Yamashita R."/>
            <person name="Nakai K."/>
            <person name="Yada T."/>
            <person name="Nakamura Y."/>
            <person name="Ohara O."/>
            <person name="Isogai T."/>
            <person name="Sugano S."/>
        </authorList>
    </citation>
    <scope>NUCLEOTIDE SEQUENCE [LARGE SCALE MRNA] (ISOFORM 1)</scope>
    <scope>NUCLEOTIDE SEQUENCE [LARGE SCALE MRNA] OF 152-1194 (ISOFORM 2)</scope>
    <scope>VARIANT SER-563</scope>
    <source>
        <tissue>Brain</tissue>
    </source>
</reference>
<reference key="4">
    <citation type="submission" date="2005-07" db="EMBL/GenBank/DDBJ databases">
        <authorList>
            <person name="Mural R.J."/>
            <person name="Istrail S."/>
            <person name="Sutton G.G."/>
            <person name="Florea L."/>
            <person name="Halpern A.L."/>
            <person name="Mobarry C.M."/>
            <person name="Lippert R."/>
            <person name="Walenz B."/>
            <person name="Shatkay H."/>
            <person name="Dew I."/>
            <person name="Miller J.R."/>
            <person name="Flanigan M.J."/>
            <person name="Edwards N.J."/>
            <person name="Bolanos R."/>
            <person name="Fasulo D."/>
            <person name="Halldorsson B.V."/>
            <person name="Hannenhalli S."/>
            <person name="Turner R."/>
            <person name="Yooseph S."/>
            <person name="Lu F."/>
            <person name="Nusskern D.R."/>
            <person name="Shue B.C."/>
            <person name="Zheng X.H."/>
            <person name="Zhong F."/>
            <person name="Delcher A.L."/>
            <person name="Huson D.H."/>
            <person name="Kravitz S.A."/>
            <person name="Mouchard L."/>
            <person name="Reinert K."/>
            <person name="Remington K.A."/>
            <person name="Clark A.G."/>
            <person name="Waterman M.S."/>
            <person name="Eichler E.E."/>
            <person name="Adams M.D."/>
            <person name="Hunkapiller M.W."/>
            <person name="Myers E.W."/>
            <person name="Venter J.C."/>
        </authorList>
    </citation>
    <scope>NUCLEOTIDE SEQUENCE [LARGE SCALE GENOMIC DNA]</scope>
    <scope>VARIANT SER-563</scope>
</reference>
<reference key="5">
    <citation type="journal article" date="2004" name="Genome Res.">
        <title>The status, quality, and expansion of the NIH full-length cDNA project: the Mammalian Gene Collection (MGC).</title>
        <authorList>
            <consortium name="The MGC Project Team"/>
        </authorList>
    </citation>
    <scope>NUCLEOTIDE SEQUENCE [LARGE SCALE MRNA] (ISOFORM 1)</scope>
    <scope>NUCLEOTIDE SEQUENCE [LARGE SCALE MRNA] OF 909-1194 (ISOFORM 2)</scope>
    <scope>VARIANT SER-563</scope>
    <source>
        <tissue>Brain</tissue>
        <tissue>Muscle</tissue>
    </source>
</reference>
<reference key="6">
    <citation type="journal article" date="1998" name="J. Biol. Chem.">
        <title>Liprins, a family of LAR transmembrane protein-tyrosine phosphatase-interacting proteins.</title>
        <authorList>
            <person name="Serra-Pages C."/>
            <person name="Medley Q.G."/>
            <person name="Tang M."/>
            <person name="Hart A."/>
            <person name="Streuli M."/>
        </authorList>
    </citation>
    <scope>NUCLEOTIDE SEQUENCE [MRNA] OF 752-1194 (ISOFORM 1)</scope>
    <scope>TISSUE SPECIFICITY</scope>
    <scope>FUNCTION</scope>
    <scope>INTERACTION WITH PTPRD; PTPRF AND PTPRS</scope>
    <scope>OLIGOMERIZATION</scope>
    <scope>DOMAIN</scope>
</reference>
<reference key="7">
    <citation type="journal article" date="2008" name="Proc. Natl. Acad. Sci. U.S.A.">
        <title>A quantitative atlas of mitotic phosphorylation.</title>
        <authorList>
            <person name="Dephoure N."/>
            <person name="Zhou C."/>
            <person name="Villen J."/>
            <person name="Beausoleil S.A."/>
            <person name="Bakalarski C.E."/>
            <person name="Elledge S.J."/>
            <person name="Gygi S.P."/>
        </authorList>
    </citation>
    <scope>IDENTIFICATION BY MASS SPECTROMETRY [LARGE SCALE ANALYSIS]</scope>
    <source>
        <tissue>Cervix carcinoma</tissue>
    </source>
</reference>
<reference key="8">
    <citation type="journal article" date="2009" name="Anal. Chem.">
        <title>Lys-N and trypsin cover complementary parts of the phosphoproteome in a refined SCX-based approach.</title>
        <authorList>
            <person name="Gauci S."/>
            <person name="Helbig A.O."/>
            <person name="Slijper M."/>
            <person name="Krijgsveld J."/>
            <person name="Heck A.J."/>
            <person name="Mohammed S."/>
        </authorList>
    </citation>
    <scope>IDENTIFICATION BY MASS SPECTROMETRY [LARGE SCALE ANALYSIS]</scope>
</reference>
<reference key="9">
    <citation type="journal article" date="2009" name="Sci. Signal.">
        <title>Quantitative phosphoproteomic analysis of T cell receptor signaling reveals system-wide modulation of protein-protein interactions.</title>
        <authorList>
            <person name="Mayya V."/>
            <person name="Lundgren D.H."/>
            <person name="Hwang S.-I."/>
            <person name="Rezaul K."/>
            <person name="Wu L."/>
            <person name="Eng J.K."/>
            <person name="Rodionov V."/>
            <person name="Han D.K."/>
        </authorList>
    </citation>
    <scope>PHOSPHORYLATION [LARGE SCALE ANALYSIS] AT SER-17; SER-207 AND THR-714</scope>
    <scope>IDENTIFICATION BY MASS SPECTROMETRY [LARGE SCALE ANALYSIS]</scope>
    <source>
        <tissue>Leukemic T-cell</tissue>
    </source>
</reference>
<reference key="10">
    <citation type="journal article" date="2011" name="BMC Syst. Biol.">
        <title>Initial characterization of the human central proteome.</title>
        <authorList>
            <person name="Burkard T.R."/>
            <person name="Planyavsky M."/>
            <person name="Kaupe I."/>
            <person name="Breitwieser F.P."/>
            <person name="Buerckstuemmer T."/>
            <person name="Bennett K.L."/>
            <person name="Superti-Furga G."/>
            <person name="Colinge J."/>
        </authorList>
    </citation>
    <scope>IDENTIFICATION BY MASS SPECTROMETRY [LARGE SCALE ANALYSIS]</scope>
</reference>
<reference key="11">
    <citation type="journal article" date="2013" name="Histochem. Cell Biol.">
        <title>Liprin alpha3: a putative estrogen regulated acrosomal protein.</title>
        <authorList>
            <person name="Joshi C.S."/>
            <person name="Suryawanshi A.R."/>
            <person name="Khan S.A."/>
            <person name="Balasinor N.H."/>
            <person name="Khole V.V."/>
        </authorList>
    </citation>
    <scope>SUBCELLULAR LOCATION</scope>
    <scope>TISSUE SPECIFICITY</scope>
</reference>
<reference key="12">
    <citation type="journal article" date="2013" name="J. Proteome Res.">
        <title>Toward a comprehensive characterization of a human cancer cell phosphoproteome.</title>
        <authorList>
            <person name="Zhou H."/>
            <person name="Di Palma S."/>
            <person name="Preisinger C."/>
            <person name="Peng M."/>
            <person name="Polat A.N."/>
            <person name="Heck A.J."/>
            <person name="Mohammed S."/>
        </authorList>
    </citation>
    <scope>PHOSPHORYLATION [LARGE SCALE ANALYSIS] AT SER-17; SER-142; SER-683; THR-714 AND SER-1164</scope>
    <scope>IDENTIFICATION BY MASS SPECTROMETRY [LARGE SCALE ANALYSIS]</scope>
    <source>
        <tissue>Erythroleukemia</tissue>
    </source>
</reference>
<protein>
    <recommendedName>
        <fullName>Liprin-alpha-3</fullName>
    </recommendedName>
    <alternativeName>
        <fullName>Protein tyrosine phosphatase receptor type f polypeptide-interacting protein alpha-3</fullName>
        <shortName>PTPRF-interacting protein alpha-3</shortName>
    </alternativeName>
</protein>
<sequence length="1194" mass="133496">MMCEVMPTISEDGRRGSALGPDEAGGELERLMVTMLTERERLLETLREAQDGLATAQLRLRELGHEKDSLQRQLSIALPQEFAALTKELNLCREQLLEREEEIAELKAERNNTRLLLEHLECLVSRHERSLRMTVVKRQAQSPGGVSSEVEVLKALKSLFEHHKALDEKVRERLRMALERVAVLEEELELSNQETLNLREQLSRRRSGLEEPGKDGDGQTLANGLGPGGDSNRRTAELEEALERQRAEVCQLRERLAVLCRQMSQLEEELGTAHRELGKAEEANSKLQRDLKEALAQREDMEERITTLEKRYLSAQREATSLHDANDKLENELASKESLYRQSEEKSRQLAEWLDDAKQKLQQTLQKAETLPEIEAQLAQRVAALNKAEERHGNFEERLRQLEAQLEEKNQELQRARQREKMNDDHNKRLSETVDKLLSESNERLQLHLKERMGALEEKNSLSEEIANMKKLQDELLLNKEQLLAEMERMQMEIDQLRGRPPSSYSRSLPGSALELRYSQAPTLPSGAHLDPYVAGSGRAGKRGRWSGVKEEPSKDWERSAPAGSIPPPFPGELDGSDEEEAEGMFGAELLSPSGQADVQTLAIMLQEQLEAINKEIKLIQEEKETTEQRAEELESRVSSSGLDSLGRYRSSCSLPPSLTTSTLASPSPPSSGHSTPRLAPPSPAREGTDKANHVPKEEAGAPRGEGPAIPGDTPPPTPRSARLERMTQALALQAGSLEDGGPPRGSEGTPDSLHKAPKKKSIKSSIGRLFGKKEKGRMGPPGRDSSSLAGTPSDETLATDPLGLAKLTGPGDKDRRNKRKHELLEEACRQGLPFAAWDGPTVVSWLELWVGMPAWYVAACRANVKSGAIMANLSDTEIQREIGISNPLHRLKLRLAIQEMVSLTSPSAPASSRTSTGNVWMTHEEMESLTATTKPETKEISWEQILAYGDMNHEWVGNDWLPSLGLPQYRSYFMESLVDARMLDHLNKKELRGQLKMVDSFHRVSLHYGIMCLKRLNYDRKDLERRREESQTQIRDVMVWSNERVMGWVSGLGLKEFATNLTESGVHGALLALDETFDYSDLALLLQIPTQNAQARQLLEKEFSNLISLGTDRRLDEDSAKSFSRSPSWRKMFREKDLRGVTPDSAEMLPPNFRSAAAGALGSPGLPLRKLQPEGQTSGSSRADGVSVRTYSC</sequence>
<gene>
    <name type="primary">PPFIA3</name>
    <name type="synonym">KIAA0654</name>
</gene>
<proteinExistence type="evidence at protein level"/>
<evidence type="ECO:0000250" key="1">
    <source>
        <dbReference type="UniProtKB" id="P60469"/>
    </source>
</evidence>
<evidence type="ECO:0000250" key="2">
    <source>
        <dbReference type="UniProtKB" id="Q13136"/>
    </source>
</evidence>
<evidence type="ECO:0000250" key="3">
    <source>
        <dbReference type="UniProtKB" id="Q91Z79"/>
    </source>
</evidence>
<evidence type="ECO:0000255" key="4"/>
<evidence type="ECO:0000255" key="5">
    <source>
        <dbReference type="PROSITE-ProRule" id="PRU00184"/>
    </source>
</evidence>
<evidence type="ECO:0000256" key="6">
    <source>
        <dbReference type="SAM" id="MobiDB-lite"/>
    </source>
</evidence>
<evidence type="ECO:0000269" key="7">
    <source>
    </source>
</evidence>
<evidence type="ECO:0000269" key="8">
    <source>
    </source>
</evidence>
<evidence type="ECO:0000269" key="9">
    <source>
    </source>
</evidence>
<evidence type="ECO:0000269" key="10">
    <source>
    </source>
</evidence>
<evidence type="ECO:0000269" key="11">
    <source ref="4"/>
</evidence>
<evidence type="ECO:0000303" key="12">
    <source>
    </source>
</evidence>
<evidence type="ECO:0000303" key="13">
    <source>
    </source>
</evidence>
<evidence type="ECO:0000305" key="14"/>
<evidence type="ECO:0007744" key="15">
    <source>
    </source>
</evidence>
<evidence type="ECO:0007744" key="16">
    <source>
    </source>
</evidence>
<dbReference type="EMBL" id="AB014554">
    <property type="protein sequence ID" value="BAA31629.2"/>
    <property type="status" value="ALT_INIT"/>
    <property type="molecule type" value="mRNA"/>
</dbReference>
<dbReference type="EMBL" id="AK023850">
    <property type="protein sequence ID" value="BAB14702.1"/>
    <property type="molecule type" value="mRNA"/>
</dbReference>
<dbReference type="EMBL" id="AK025972">
    <property type="status" value="NOT_ANNOTATED_CDS"/>
    <property type="molecule type" value="mRNA"/>
</dbReference>
<dbReference type="EMBL" id="AK289757">
    <property type="protein sequence ID" value="BAF82446.1"/>
    <property type="molecule type" value="mRNA"/>
</dbReference>
<dbReference type="EMBL" id="CH471177">
    <property type="protein sequence ID" value="EAW52457.1"/>
    <property type="molecule type" value="Genomic_DNA"/>
</dbReference>
<dbReference type="EMBL" id="BC021255">
    <property type="protein sequence ID" value="AAH21255.2"/>
    <property type="molecule type" value="mRNA"/>
</dbReference>
<dbReference type="EMBL" id="BC101518">
    <property type="protein sequence ID" value="AAI01519.1"/>
    <property type="molecule type" value="mRNA"/>
</dbReference>
<dbReference type="EMBL" id="BC101520">
    <property type="protein sequence ID" value="AAI01521.1"/>
    <property type="molecule type" value="mRNA"/>
</dbReference>
<dbReference type="EMBL" id="AF034800">
    <property type="protein sequence ID" value="AAC26101.1"/>
    <property type="molecule type" value="mRNA"/>
</dbReference>
<dbReference type="CCDS" id="CCDS12758.1">
    <molecule id="O75145-1"/>
</dbReference>
<dbReference type="RefSeq" id="NP_003651.1">
    <molecule id="O75145-1"/>
    <property type="nucleotide sequence ID" value="NM_003660.4"/>
</dbReference>
<dbReference type="RefSeq" id="XP_016882896.1">
    <molecule id="O75145-2"/>
    <property type="nucleotide sequence ID" value="XM_017027407.2"/>
</dbReference>
<dbReference type="RefSeq" id="XP_047295538.1">
    <molecule id="O75145-1"/>
    <property type="nucleotide sequence ID" value="XM_047439582.1"/>
</dbReference>
<dbReference type="RefSeq" id="XP_047295539.1">
    <molecule id="O75145-2"/>
    <property type="nucleotide sequence ID" value="XM_047439583.1"/>
</dbReference>
<dbReference type="SMR" id="O75145"/>
<dbReference type="BioGRID" id="114111">
    <property type="interactions" value="42"/>
</dbReference>
<dbReference type="FunCoup" id="O75145">
    <property type="interactions" value="659"/>
</dbReference>
<dbReference type="IntAct" id="O75145">
    <property type="interactions" value="22"/>
</dbReference>
<dbReference type="MINT" id="O75145"/>
<dbReference type="STRING" id="9606.ENSP00000335614"/>
<dbReference type="GlyGen" id="O75145">
    <property type="glycosylation" value="2 sites, 1 O-linked glycan (1 site)"/>
</dbReference>
<dbReference type="iPTMnet" id="O75145"/>
<dbReference type="PhosphoSitePlus" id="O75145"/>
<dbReference type="BioMuta" id="PPFIA3"/>
<dbReference type="jPOST" id="O75145"/>
<dbReference type="MassIVE" id="O75145"/>
<dbReference type="PaxDb" id="9606-ENSP00000335614"/>
<dbReference type="PeptideAtlas" id="O75145"/>
<dbReference type="ProteomicsDB" id="49808">
    <molecule id="O75145-1"/>
</dbReference>
<dbReference type="ProteomicsDB" id="49809">
    <molecule id="O75145-2"/>
</dbReference>
<dbReference type="Pumba" id="O75145"/>
<dbReference type="Antibodypedia" id="31915">
    <property type="antibodies" value="65 antibodies from 22 providers"/>
</dbReference>
<dbReference type="DNASU" id="8541"/>
<dbReference type="Ensembl" id="ENST00000334186.9">
    <molecule id="O75145-1"/>
    <property type="protein sequence ID" value="ENSP00000335614.3"/>
    <property type="gene ID" value="ENSG00000177380.14"/>
</dbReference>
<dbReference type="Ensembl" id="ENST00000602351.5">
    <molecule id="O75145-2"/>
    <property type="protein sequence ID" value="ENSP00000473622.1"/>
    <property type="gene ID" value="ENSG00000177380.14"/>
</dbReference>
<dbReference type="GeneID" id="8541"/>
<dbReference type="KEGG" id="hsa:8541"/>
<dbReference type="MANE-Select" id="ENST00000334186.9">
    <property type="protein sequence ID" value="ENSP00000335614.3"/>
    <property type="RefSeq nucleotide sequence ID" value="NM_003660.4"/>
    <property type="RefSeq protein sequence ID" value="NP_003651.1"/>
</dbReference>
<dbReference type="UCSC" id="uc002pmr.5">
    <molecule id="O75145-1"/>
    <property type="organism name" value="human"/>
</dbReference>
<dbReference type="AGR" id="HGNC:9247"/>
<dbReference type="CTD" id="8541"/>
<dbReference type="DisGeNET" id="8541"/>
<dbReference type="GeneCards" id="PPFIA3"/>
<dbReference type="HGNC" id="HGNC:9247">
    <property type="gene designation" value="PPFIA3"/>
</dbReference>
<dbReference type="HPA" id="ENSG00000177380">
    <property type="expression patterns" value="Tissue enhanced (brain, pituitary gland, skin)"/>
</dbReference>
<dbReference type="MIM" id="603144">
    <property type="type" value="gene"/>
</dbReference>
<dbReference type="neXtProt" id="NX_O75145"/>
<dbReference type="OpenTargets" id="ENSG00000177380"/>
<dbReference type="PharmGKB" id="PA33568"/>
<dbReference type="VEuPathDB" id="HostDB:ENSG00000177380"/>
<dbReference type="eggNOG" id="KOG0249">
    <property type="taxonomic scope" value="Eukaryota"/>
</dbReference>
<dbReference type="GeneTree" id="ENSGT01050000244900"/>
<dbReference type="HOGENOM" id="CLU_006923_0_0_1"/>
<dbReference type="InParanoid" id="O75145"/>
<dbReference type="OMA" id="LMMMCEV"/>
<dbReference type="OrthoDB" id="2132119at2759"/>
<dbReference type="PAN-GO" id="O75145">
    <property type="GO annotations" value="2 GO annotations based on evolutionary models"/>
</dbReference>
<dbReference type="PhylomeDB" id="O75145"/>
<dbReference type="TreeFam" id="TF314207"/>
<dbReference type="PathwayCommons" id="O75145"/>
<dbReference type="Reactome" id="R-HSA-181429">
    <property type="pathway name" value="Serotonin Neurotransmitter Release Cycle"/>
</dbReference>
<dbReference type="Reactome" id="R-HSA-181430">
    <property type="pathway name" value="Norepinephrine Neurotransmitter Release Cycle"/>
</dbReference>
<dbReference type="Reactome" id="R-HSA-210500">
    <property type="pathway name" value="Glutamate Neurotransmitter Release Cycle"/>
</dbReference>
<dbReference type="Reactome" id="R-HSA-212676">
    <property type="pathway name" value="Dopamine Neurotransmitter Release Cycle"/>
</dbReference>
<dbReference type="Reactome" id="R-HSA-264642">
    <property type="pathway name" value="Acetylcholine Neurotransmitter Release Cycle"/>
</dbReference>
<dbReference type="Reactome" id="R-HSA-388844">
    <property type="pathway name" value="Receptor-type tyrosine-protein phosphatases"/>
</dbReference>
<dbReference type="SignaLink" id="O75145"/>
<dbReference type="BioGRID-ORCS" id="8541">
    <property type="hits" value="14 hits in 1157 CRISPR screens"/>
</dbReference>
<dbReference type="CD-CODE" id="FB4E32DD">
    <property type="entry name" value="Presynaptic clusters and postsynaptic densities"/>
</dbReference>
<dbReference type="ChiTaRS" id="PPFIA3">
    <property type="organism name" value="human"/>
</dbReference>
<dbReference type="GenomeRNAi" id="8541"/>
<dbReference type="Pharos" id="O75145">
    <property type="development level" value="Tbio"/>
</dbReference>
<dbReference type="PRO" id="PR:O75145"/>
<dbReference type="Proteomes" id="UP000005640">
    <property type="component" value="Chromosome 19"/>
</dbReference>
<dbReference type="RNAct" id="O75145">
    <property type="molecule type" value="protein"/>
</dbReference>
<dbReference type="Bgee" id="ENSG00000177380">
    <property type="expression patterns" value="Expressed in right hemisphere of cerebellum and 123 other cell types or tissues"/>
</dbReference>
<dbReference type="ExpressionAtlas" id="O75145">
    <property type="expression patterns" value="baseline and differential"/>
</dbReference>
<dbReference type="GO" id="GO:0001669">
    <property type="term" value="C:acrosomal vesicle"/>
    <property type="evidence" value="ECO:0000314"/>
    <property type="project" value="UniProtKB"/>
</dbReference>
<dbReference type="GO" id="GO:0005829">
    <property type="term" value="C:cytosol"/>
    <property type="evidence" value="ECO:0000304"/>
    <property type="project" value="Reactome"/>
</dbReference>
<dbReference type="GO" id="GO:0098875">
    <property type="term" value="C:epididymosome"/>
    <property type="evidence" value="ECO:0000250"/>
    <property type="project" value="UniProtKB"/>
</dbReference>
<dbReference type="GO" id="GO:0098978">
    <property type="term" value="C:glutamatergic synapse"/>
    <property type="evidence" value="ECO:0007669"/>
    <property type="project" value="Ensembl"/>
</dbReference>
<dbReference type="GO" id="GO:0048786">
    <property type="term" value="C:presynaptic active zone"/>
    <property type="evidence" value="ECO:0000318"/>
    <property type="project" value="GO_Central"/>
</dbReference>
<dbReference type="GO" id="GO:0098831">
    <property type="term" value="C:presynaptic active zone cytoplasmic component"/>
    <property type="evidence" value="ECO:0007669"/>
    <property type="project" value="Ensembl"/>
</dbReference>
<dbReference type="GO" id="GO:0007269">
    <property type="term" value="P:neurotransmitter secretion"/>
    <property type="evidence" value="ECO:0000250"/>
    <property type="project" value="ParkinsonsUK-UCL"/>
</dbReference>
<dbReference type="GO" id="GO:0048172">
    <property type="term" value="P:regulation of short-term neuronal synaptic plasticity"/>
    <property type="evidence" value="ECO:0000250"/>
    <property type="project" value="ParkinsonsUK-UCL"/>
</dbReference>
<dbReference type="GO" id="GO:0050808">
    <property type="term" value="P:synapse organization"/>
    <property type="evidence" value="ECO:0000318"/>
    <property type="project" value="GO_Central"/>
</dbReference>
<dbReference type="GO" id="GO:0016081">
    <property type="term" value="P:synaptic vesicle docking"/>
    <property type="evidence" value="ECO:0007669"/>
    <property type="project" value="Ensembl"/>
</dbReference>
<dbReference type="CDD" id="cd09562">
    <property type="entry name" value="SAM_liprin-alpha1_2_3_4_repeat1"/>
    <property type="match status" value="1"/>
</dbReference>
<dbReference type="CDD" id="cd09565">
    <property type="entry name" value="SAM_liprin-alpha1_2_3_4_repeat2"/>
    <property type="match status" value="1"/>
</dbReference>
<dbReference type="CDD" id="cd09568">
    <property type="entry name" value="SAM_liprin-alpha1_2_3_4_repeat3"/>
    <property type="match status" value="1"/>
</dbReference>
<dbReference type="FunFam" id="1.10.150.50:FF:000003">
    <property type="entry name" value="liprin-alpha-2 isoform X1"/>
    <property type="match status" value="1"/>
</dbReference>
<dbReference type="FunFam" id="1.10.150.50:FF:000002">
    <property type="entry name" value="PTPRF interacting protein alpha 1"/>
    <property type="match status" value="1"/>
</dbReference>
<dbReference type="FunFam" id="1.10.150.50:FF:000004">
    <property type="entry name" value="PTPRF interacting protein alpha 1"/>
    <property type="match status" value="1"/>
</dbReference>
<dbReference type="Gene3D" id="1.10.287.1490">
    <property type="match status" value="1"/>
</dbReference>
<dbReference type="Gene3D" id="1.10.150.50">
    <property type="entry name" value="Transcription Factor, Ets-1"/>
    <property type="match status" value="3"/>
</dbReference>
<dbReference type="InterPro" id="IPR029515">
    <property type="entry name" value="Liprin"/>
</dbReference>
<dbReference type="InterPro" id="IPR037620">
    <property type="entry name" value="Liprin-alpha_SAM_rpt_1"/>
</dbReference>
<dbReference type="InterPro" id="IPR037621">
    <property type="entry name" value="Liprin-alpha_SAM_rpt_2"/>
</dbReference>
<dbReference type="InterPro" id="IPR037622">
    <property type="entry name" value="Liprin-alpha_SAM_rpt_3"/>
</dbReference>
<dbReference type="InterPro" id="IPR001660">
    <property type="entry name" value="SAM"/>
</dbReference>
<dbReference type="InterPro" id="IPR013761">
    <property type="entry name" value="SAM/pointed_sf"/>
</dbReference>
<dbReference type="PANTHER" id="PTHR12587">
    <property type="entry name" value="LAR INTERACTING PROTEIN LIP -RELATED PROTEIN"/>
    <property type="match status" value="1"/>
</dbReference>
<dbReference type="PANTHER" id="PTHR12587:SF4">
    <property type="entry name" value="LIPRIN-ALPHA-3"/>
    <property type="match status" value="1"/>
</dbReference>
<dbReference type="Pfam" id="PF00536">
    <property type="entry name" value="SAM_1"/>
    <property type="match status" value="2"/>
</dbReference>
<dbReference type="Pfam" id="PF07647">
    <property type="entry name" value="SAM_2"/>
    <property type="match status" value="1"/>
</dbReference>
<dbReference type="SMART" id="SM00454">
    <property type="entry name" value="SAM"/>
    <property type="match status" value="3"/>
</dbReference>
<dbReference type="SUPFAM" id="SSF47769">
    <property type="entry name" value="SAM/Pointed domain"/>
    <property type="match status" value="3"/>
</dbReference>
<dbReference type="PROSITE" id="PS50105">
    <property type="entry name" value="SAM_DOMAIN"/>
    <property type="match status" value="3"/>
</dbReference>
<organism>
    <name type="scientific">Homo sapiens</name>
    <name type="common">Human</name>
    <dbReference type="NCBI Taxonomy" id="9606"/>
    <lineage>
        <taxon>Eukaryota</taxon>
        <taxon>Metazoa</taxon>
        <taxon>Chordata</taxon>
        <taxon>Craniata</taxon>
        <taxon>Vertebrata</taxon>
        <taxon>Euteleostomi</taxon>
        <taxon>Mammalia</taxon>
        <taxon>Eutheria</taxon>
        <taxon>Euarchontoglires</taxon>
        <taxon>Primates</taxon>
        <taxon>Haplorrhini</taxon>
        <taxon>Catarrhini</taxon>
        <taxon>Hominidae</taxon>
        <taxon>Homo</taxon>
    </lineage>
</organism>
<comment type="function">
    <text evidence="10">May regulate the disassembly of focal adhesions. May localize receptor-like tyrosine phosphatases type 2A at specific sites on the plasma membrane, possibly regulating their interaction with the extracellular environment and their association with substrates.</text>
</comment>
<comment type="subunit">
    <text evidence="3 10">Forms homodimers and heterodimers with liprins-alpha and liprins-beta (PubMed:9624153). Interacts with the second PTPase domain of PTPRD, PTPRF and PTPRS (PubMed:9624153). Binds RIMS1, RIMS2, RIMS3 and RIMS4 (By similarity).</text>
</comment>
<comment type="interaction">
    <interactant intactId="EBI-1763225">
        <id>O75145</id>
    </interactant>
    <interactant intactId="EBI-11524851">
        <id>Q8NA61-2</id>
        <label>CBY2</label>
    </interactant>
    <organismsDiffer>false</organismsDiffer>
    <experiments>3</experiments>
</comment>
<comment type="interaction">
    <interactant intactId="EBI-1763225">
        <id>O75145</id>
    </interactant>
    <interactant intactId="EBI-11988027">
        <id>Q9NRI5-2</id>
        <label>DISC1</label>
    </interactant>
    <organismsDiffer>false</organismsDiffer>
    <experiments>3</experiments>
</comment>
<comment type="interaction">
    <interactant intactId="EBI-1763225">
        <id>O75145</id>
    </interactant>
    <interactant intactId="EBI-1105153">
        <id>Q96KQ4</id>
        <label>PPP1R13B</label>
    </interactant>
    <organismsDiffer>false</organismsDiffer>
    <experiments>3</experiments>
</comment>
<comment type="interaction">
    <interactant intactId="EBI-1763225">
        <id>O75145</id>
    </interactant>
    <interactant intactId="EBI-741237">
        <id>O60504</id>
        <label>SORBS3</label>
    </interactant>
    <organismsDiffer>false</organismsDiffer>
    <experiments>3</experiments>
</comment>
<comment type="interaction">
    <interactant intactId="EBI-1763225">
        <id>O75145</id>
    </interactant>
    <interactant intactId="EBI-1105213">
        <id>Q9UBB9</id>
        <label>TFIP11</label>
    </interactant>
    <organismsDiffer>false</organismsDiffer>
    <experiments>3</experiments>
</comment>
<comment type="subcellular location">
    <subcellularLocation>
        <location evidence="3">Cytoplasm</location>
    </subcellularLocation>
    <subcellularLocation>
        <location evidence="9">Cytoplasmic vesicle</location>
        <location evidence="9">Secretory vesicle</location>
        <location evidence="9">Acrosome</location>
    </subcellularLocation>
    <text evidence="3">Also detected in epididymosome.</text>
</comment>
<comment type="alternative products">
    <event type="alternative splicing"/>
    <isoform>
        <id>O75145-1</id>
        <name>1</name>
        <sequence type="displayed"/>
    </isoform>
    <isoform>
        <id>O75145-2</id>
        <name>2</name>
        <sequence type="described" ref="VSP_009392"/>
    </isoform>
</comment>
<comment type="tissue specificity">
    <text evidence="9 10">Predominantly expressed in brain (PubMed:9624153). Also detected in sperm (at protein level) (PubMed:23124857).</text>
</comment>
<comment type="domain">
    <text evidence="10">The N-terminal coiled coil regions mediate homodimerization preferentially and heterodimerization type alpha/alpha. The C-terminal, non-coiled coil regions mediate heterodimerization type alpha/beta and interaction with PTPRD, PTPRF and PTPRS.</text>
</comment>
<comment type="miscellaneous">
    <molecule>Isoform 2</molecule>
    <text evidence="14">May be due to exon skipping.</text>
</comment>
<comment type="similarity">
    <text evidence="14">Belongs to the liprin family. Liprin-alpha subfamily.</text>
</comment>
<comment type="sequence caution" evidence="14">
    <conflict type="erroneous initiation">
        <sequence resource="EMBL-CDS" id="BAA31629"/>
    </conflict>
</comment>